<protein>
    <recommendedName>
        <fullName evidence="7">Enolase 1</fullName>
        <shortName evidence="6">EhENO</shortName>
        <ecNumber evidence="3">4.2.1.11</ecNumber>
    </recommendedName>
    <alternativeName>
        <fullName>2-phospho-D-glycerate hydro-lyase</fullName>
    </alternativeName>
    <alternativeName>
        <fullName>2-phosphoglycerate dehydratase</fullName>
    </alternativeName>
</protein>
<dbReference type="EC" id="4.2.1.11" evidence="3"/>
<dbReference type="EMBL" id="U09736">
    <property type="protein sequence ID" value="AAA80166.1"/>
    <property type="molecule type" value="mRNA"/>
</dbReference>
<dbReference type="EMBL" id="AK418805">
    <property type="protein sequence ID" value="BAN37550.1"/>
    <property type="molecule type" value="mRNA"/>
</dbReference>
<dbReference type="EMBL" id="AK418897">
    <property type="protein sequence ID" value="BAN37631.1"/>
    <property type="molecule type" value="mRNA"/>
</dbReference>
<dbReference type="EMBL" id="AK419306">
    <property type="protein sequence ID" value="BAN37996.1"/>
    <property type="molecule type" value="mRNA"/>
</dbReference>
<dbReference type="EMBL" id="AK419593">
    <property type="protein sequence ID" value="BAN38258.1"/>
    <property type="molecule type" value="mRNA"/>
</dbReference>
<dbReference type="EMBL" id="AK419617">
    <property type="protein sequence ID" value="BAN38282.1"/>
    <property type="molecule type" value="mRNA"/>
</dbReference>
<dbReference type="EMBL" id="AK419676">
    <property type="protein sequence ID" value="BAN38334.1"/>
    <property type="molecule type" value="mRNA"/>
</dbReference>
<dbReference type="EMBL" id="AK419790">
    <property type="protein sequence ID" value="BAN38438.1"/>
    <property type="molecule type" value="mRNA"/>
</dbReference>
<dbReference type="EMBL" id="AK419812">
    <property type="protein sequence ID" value="BAN38458.1"/>
    <property type="molecule type" value="mRNA"/>
</dbReference>
<dbReference type="EMBL" id="AK419816">
    <property type="protein sequence ID" value="BAN38462.1"/>
    <property type="molecule type" value="mRNA"/>
</dbReference>
<dbReference type="EMBL" id="AK419883">
    <property type="protein sequence ID" value="BAN38524.1"/>
    <property type="molecule type" value="mRNA"/>
</dbReference>
<dbReference type="EMBL" id="AK419887">
    <property type="protein sequence ID" value="BAN38528.1"/>
    <property type="molecule type" value="mRNA"/>
</dbReference>
<dbReference type="EMBL" id="AK419955">
    <property type="protein sequence ID" value="BAN38587.1"/>
    <property type="molecule type" value="mRNA"/>
</dbReference>
<dbReference type="EMBL" id="AK420022">
    <property type="protein sequence ID" value="BAN38653.1"/>
    <property type="molecule type" value="mRNA"/>
</dbReference>
<dbReference type="EMBL" id="AK420226">
    <property type="protein sequence ID" value="BAN38847.1"/>
    <property type="molecule type" value="mRNA"/>
</dbReference>
<dbReference type="EMBL" id="AK420333">
    <property type="protein sequence ID" value="BAN38948.1"/>
    <property type="molecule type" value="mRNA"/>
</dbReference>
<dbReference type="EMBL" id="AK420363">
    <property type="protein sequence ID" value="BAN38977.1"/>
    <property type="molecule type" value="mRNA"/>
</dbReference>
<dbReference type="EMBL" id="AK420379">
    <property type="protein sequence ID" value="BAN38992.1"/>
    <property type="molecule type" value="mRNA"/>
</dbReference>
<dbReference type="EMBL" id="AK420409">
    <property type="protein sequence ID" value="BAN39022.1"/>
    <property type="molecule type" value="mRNA"/>
</dbReference>
<dbReference type="EMBL" id="AK420534">
    <property type="protein sequence ID" value="BAN39141.1"/>
    <property type="molecule type" value="mRNA"/>
</dbReference>
<dbReference type="EMBL" id="AK420654">
    <property type="protein sequence ID" value="BAN39250.1"/>
    <property type="molecule type" value="mRNA"/>
</dbReference>
<dbReference type="EMBL" id="AK420726">
    <property type="protein sequence ID" value="BAN39317.1"/>
    <property type="molecule type" value="mRNA"/>
</dbReference>
<dbReference type="EMBL" id="AK420875">
    <property type="protein sequence ID" value="BAN39462.1"/>
    <property type="molecule type" value="mRNA"/>
</dbReference>
<dbReference type="EMBL" id="AK420910">
    <property type="protein sequence ID" value="BAN39494.1"/>
    <property type="molecule type" value="mRNA"/>
</dbReference>
<dbReference type="EMBL" id="AK421000">
    <property type="protein sequence ID" value="BAN39576.1"/>
    <property type="molecule type" value="mRNA"/>
</dbReference>
<dbReference type="EMBL" id="AK421082">
    <property type="protein sequence ID" value="BAN39654.1"/>
    <property type="molecule type" value="mRNA"/>
</dbReference>
<dbReference type="EMBL" id="AK421175">
    <property type="protein sequence ID" value="BAN39740.1"/>
    <property type="molecule type" value="mRNA"/>
</dbReference>
<dbReference type="EMBL" id="AK421207">
    <property type="protein sequence ID" value="BAN39770.1"/>
    <property type="molecule type" value="mRNA"/>
</dbReference>
<dbReference type="EMBL" id="AK421314">
    <property type="protein sequence ID" value="BAN39874.1"/>
    <property type="molecule type" value="mRNA"/>
</dbReference>
<dbReference type="EMBL" id="AK421366">
    <property type="protein sequence ID" value="BAN39922.1"/>
    <property type="molecule type" value="mRNA"/>
</dbReference>
<dbReference type="EMBL" id="AK421393">
    <property type="protein sequence ID" value="BAN39949.1"/>
    <property type="molecule type" value="mRNA"/>
</dbReference>
<dbReference type="EMBL" id="AK421613">
    <property type="protein sequence ID" value="BAN40145.1"/>
    <property type="molecule type" value="mRNA"/>
</dbReference>
<dbReference type="EMBL" id="DS571170">
    <property type="protein sequence ID" value="EAL43773.1"/>
    <property type="molecule type" value="Genomic_DNA"/>
</dbReference>
<dbReference type="RefSeq" id="XP_649161.1">
    <property type="nucleotide sequence ID" value="XM_644069.2"/>
</dbReference>
<dbReference type="PDB" id="3QTP">
    <property type="method" value="X-ray"/>
    <property type="resolution" value="1.90 A"/>
    <property type="chains" value="A/B=1-436"/>
</dbReference>
<dbReference type="PDBsum" id="3QTP"/>
<dbReference type="SMR" id="P51555"/>
<dbReference type="STRING" id="5759.C4LXE8"/>
<dbReference type="EnsemblProtists" id="GAT93425">
    <property type="protein sequence ID" value="GAT93425"/>
    <property type="gene ID" value="CL6EHI_130700"/>
</dbReference>
<dbReference type="EnsemblProtists" id="rna_EHI_130700-1">
    <property type="protein sequence ID" value="rna_EHI_130700-1"/>
    <property type="gene ID" value="EHI_130700"/>
</dbReference>
<dbReference type="GeneID" id="3403451"/>
<dbReference type="KEGG" id="ehi:EHI_130700"/>
<dbReference type="VEuPathDB" id="AmoebaDB:EHI5A_036590"/>
<dbReference type="VEuPathDB" id="AmoebaDB:EHI7A_041120"/>
<dbReference type="VEuPathDB" id="AmoebaDB:EHI8A_039740"/>
<dbReference type="VEuPathDB" id="AmoebaDB:EHI_130700"/>
<dbReference type="VEuPathDB" id="AmoebaDB:KM1_070570"/>
<dbReference type="eggNOG" id="KOG2670">
    <property type="taxonomic scope" value="Eukaryota"/>
</dbReference>
<dbReference type="HOGENOM" id="CLU_031223_0_0_1"/>
<dbReference type="OMA" id="RCMMSHR"/>
<dbReference type="OrthoDB" id="1739814at2759"/>
<dbReference type="BRENDA" id="4.2.1.11">
    <property type="organism ID" value="2080"/>
</dbReference>
<dbReference type="SABIO-RK" id="P51555"/>
<dbReference type="UniPathway" id="UPA00109">
    <property type="reaction ID" value="UER00187"/>
</dbReference>
<dbReference type="Proteomes" id="UP000001926">
    <property type="component" value="Partially assembled WGS sequence"/>
</dbReference>
<dbReference type="GO" id="GO:0005634">
    <property type="term" value="C:nucleus"/>
    <property type="evidence" value="ECO:0007669"/>
    <property type="project" value="UniProtKB-SubCell"/>
</dbReference>
<dbReference type="GO" id="GO:0000015">
    <property type="term" value="C:phosphopyruvate hydratase complex"/>
    <property type="evidence" value="ECO:0000318"/>
    <property type="project" value="GO_Central"/>
</dbReference>
<dbReference type="GO" id="GO:0000287">
    <property type="term" value="F:magnesium ion binding"/>
    <property type="evidence" value="ECO:0007669"/>
    <property type="project" value="InterPro"/>
</dbReference>
<dbReference type="GO" id="GO:0004634">
    <property type="term" value="F:phosphopyruvate hydratase activity"/>
    <property type="evidence" value="ECO:0000318"/>
    <property type="project" value="GO_Central"/>
</dbReference>
<dbReference type="GO" id="GO:0006096">
    <property type="term" value="P:glycolytic process"/>
    <property type="evidence" value="ECO:0000318"/>
    <property type="project" value="GO_Central"/>
</dbReference>
<dbReference type="CDD" id="cd03313">
    <property type="entry name" value="enolase"/>
    <property type="match status" value="1"/>
</dbReference>
<dbReference type="FunFam" id="3.30.390.10:FF:000001">
    <property type="entry name" value="Enolase"/>
    <property type="match status" value="1"/>
</dbReference>
<dbReference type="FunFam" id="3.20.20.120:FF:000002">
    <property type="entry name" value="Enolase 1"/>
    <property type="match status" value="1"/>
</dbReference>
<dbReference type="Gene3D" id="3.20.20.120">
    <property type="entry name" value="Enolase-like C-terminal domain"/>
    <property type="match status" value="1"/>
</dbReference>
<dbReference type="Gene3D" id="3.30.390.10">
    <property type="entry name" value="Enolase-like, N-terminal domain"/>
    <property type="match status" value="1"/>
</dbReference>
<dbReference type="HAMAP" id="MF_00318">
    <property type="entry name" value="Enolase"/>
    <property type="match status" value="1"/>
</dbReference>
<dbReference type="InterPro" id="IPR000941">
    <property type="entry name" value="Enolase"/>
</dbReference>
<dbReference type="InterPro" id="IPR036849">
    <property type="entry name" value="Enolase-like_C_sf"/>
</dbReference>
<dbReference type="InterPro" id="IPR029017">
    <property type="entry name" value="Enolase-like_N"/>
</dbReference>
<dbReference type="InterPro" id="IPR020810">
    <property type="entry name" value="Enolase_C"/>
</dbReference>
<dbReference type="InterPro" id="IPR020809">
    <property type="entry name" value="Enolase_CS"/>
</dbReference>
<dbReference type="InterPro" id="IPR020811">
    <property type="entry name" value="Enolase_N"/>
</dbReference>
<dbReference type="NCBIfam" id="TIGR01060">
    <property type="entry name" value="eno"/>
    <property type="match status" value="1"/>
</dbReference>
<dbReference type="PANTHER" id="PTHR11902">
    <property type="entry name" value="ENOLASE"/>
    <property type="match status" value="1"/>
</dbReference>
<dbReference type="PANTHER" id="PTHR11902:SF1">
    <property type="entry name" value="ENOLASE"/>
    <property type="match status" value="1"/>
</dbReference>
<dbReference type="Pfam" id="PF00113">
    <property type="entry name" value="Enolase_C"/>
    <property type="match status" value="1"/>
</dbReference>
<dbReference type="Pfam" id="PF03952">
    <property type="entry name" value="Enolase_N"/>
    <property type="match status" value="1"/>
</dbReference>
<dbReference type="PIRSF" id="PIRSF001400">
    <property type="entry name" value="Enolase"/>
    <property type="match status" value="1"/>
</dbReference>
<dbReference type="PRINTS" id="PR00148">
    <property type="entry name" value="ENOLASE"/>
</dbReference>
<dbReference type="SFLD" id="SFLDS00001">
    <property type="entry name" value="Enolase"/>
    <property type="match status" value="1"/>
</dbReference>
<dbReference type="SFLD" id="SFLDF00002">
    <property type="entry name" value="enolase"/>
    <property type="match status" value="1"/>
</dbReference>
<dbReference type="SMART" id="SM01192">
    <property type="entry name" value="Enolase_C"/>
    <property type="match status" value="1"/>
</dbReference>
<dbReference type="SMART" id="SM01193">
    <property type="entry name" value="Enolase_N"/>
    <property type="match status" value="1"/>
</dbReference>
<dbReference type="SUPFAM" id="SSF51604">
    <property type="entry name" value="Enolase C-terminal domain-like"/>
    <property type="match status" value="1"/>
</dbReference>
<dbReference type="SUPFAM" id="SSF54826">
    <property type="entry name" value="Enolase N-terminal domain-like"/>
    <property type="match status" value="1"/>
</dbReference>
<dbReference type="PROSITE" id="PS00164">
    <property type="entry name" value="ENOLASE"/>
    <property type="match status" value="1"/>
</dbReference>
<reference evidence="10" key="1">
    <citation type="journal article" date="1995" name="Mol. Biochem. Parasitol.">
        <title>The primary structure of an Entamoeba histolytica enolase.</title>
        <authorList>
            <person name="Beanan M.J."/>
            <person name="Bailey G.B."/>
        </authorList>
    </citation>
    <scope>NUCLEOTIDE SEQUENCE [MRNA]</scope>
    <source>
        <strain evidence="10">ATCC 30459 / HM-1:IMSS / ABRM</strain>
    </source>
</reference>
<reference evidence="11" key="2">
    <citation type="submission" date="2012-06" db="EMBL/GenBank/DDBJ databases">
        <title>Short 5' UTR of Entamoeba genes.</title>
        <authorList>
            <person name="Hiranuka K."/>
            <person name="Kumagai M."/>
            <person name="Wakaguri H."/>
            <person name="Suzuki Y."/>
            <person name="Sugano S."/>
            <person name="Watanabe J."/>
            <person name="Makioka A."/>
        </authorList>
    </citation>
    <scope>NUCLEOTIDE SEQUENCE [MRNA]</scope>
    <source>
        <strain evidence="11">ATCC 30459 / HM-1:IMSS / ABRM</strain>
    </source>
</reference>
<reference evidence="12" key="3">
    <citation type="journal article" date="2005" name="Nature">
        <title>The genome of the protist parasite Entamoeba histolytica.</title>
        <authorList>
            <person name="Loftus B.J."/>
            <person name="Anderson I."/>
            <person name="Davies R."/>
            <person name="Alsmark U.C."/>
            <person name="Samuelson J."/>
            <person name="Amedeo P."/>
            <person name="Roncaglia P."/>
            <person name="Berriman M."/>
            <person name="Hirt R.P."/>
            <person name="Mann B.J."/>
            <person name="Nozaki T."/>
            <person name="Suh B."/>
            <person name="Pop M."/>
            <person name="Duchene M."/>
            <person name="Ackers J."/>
            <person name="Tannich E."/>
            <person name="Leippe M."/>
            <person name="Hofer M."/>
            <person name="Bruchhaus I."/>
            <person name="Willhoeft U."/>
            <person name="Bhattacharya A."/>
            <person name="Chillingworth T."/>
            <person name="Churcher C.M."/>
            <person name="Hance Z."/>
            <person name="Harris B."/>
            <person name="Harris D."/>
            <person name="Jagels K."/>
            <person name="Moule S."/>
            <person name="Mungall K.L."/>
            <person name="Ormond D."/>
            <person name="Squares R."/>
            <person name="Whitehead S."/>
            <person name="Quail M.A."/>
            <person name="Rabbinowitsch E."/>
            <person name="Norbertczak H."/>
            <person name="Price C."/>
            <person name="Wang Z."/>
            <person name="Guillen N."/>
            <person name="Gilchrist C."/>
            <person name="Stroup S.E."/>
            <person name="Bhattacharya S."/>
            <person name="Lohia A."/>
            <person name="Foster P.G."/>
            <person name="Sicheritz-Ponten T."/>
            <person name="Weber C."/>
            <person name="Singh U."/>
            <person name="Mukherjee C."/>
            <person name="El-Sayed N.M.A."/>
            <person name="Petri W.A."/>
            <person name="Clark C.G."/>
            <person name="Embley T.M."/>
            <person name="Barrell B.G."/>
            <person name="Fraser C.M."/>
            <person name="Hall N."/>
        </authorList>
    </citation>
    <scope>NUCLEOTIDE SEQUENCE [LARGE SCALE GENOMIC DNA]</scope>
    <source>
        <strain evidence="12">ATCC 30459 / HM-1:IMSS / ABRM</strain>
    </source>
</reference>
<reference key="4">
    <citation type="journal article" date="2005" name="FEBS J.">
        <title>Glycolysis in Entamoeba histolytica. Biochemical characterization of recombinant glycolytic enzymes and flux control analysis.</title>
        <authorList>
            <person name="Saavedra E."/>
            <person name="Encalada R."/>
            <person name="Pineda E."/>
            <person name="Jasso-Chavez R."/>
            <person name="Moreno-Sanchez R."/>
        </authorList>
    </citation>
    <scope>FUNCTION</scope>
    <scope>CATALYTIC ACTIVITY</scope>
    <scope>COFACTOR</scope>
    <scope>BIOPHYSICOCHEMICAL PROPERTIES</scope>
    <scope>PATHWAY</scope>
    <scope>SUBUNIT</scope>
</reference>
<reference key="5">
    <citation type="journal article" date="2010" name="PLoS Pathog.">
        <title>A new nuclear function of the Entamoeba histolytica glycolytic enzyme enolase: the metabolic regulation of cytosine-5 methyltransferase 2 (Dnmt2) activity.</title>
        <authorList>
            <person name="Tovy A."/>
            <person name="Siman Tov R."/>
            <person name="Gaentzsch R."/>
            <person name="Helm M."/>
            <person name="Ankri S."/>
        </authorList>
    </citation>
    <scope>FUNCTION</scope>
    <scope>INTERACTION WITH METH</scope>
    <scope>SUBCELLULAR LOCATION</scope>
    <scope>DEVELOPMENTAL STAGE</scope>
</reference>
<reference evidence="13" key="6">
    <citation type="journal article" date="2011" name="Acta Crystallogr. D">
        <title>Structure analysis of Entamoeba histolytica enolase.</title>
        <authorList>
            <person name="Schulz E.C."/>
            <person name="Tietzel M."/>
            <person name="Tovy A."/>
            <person name="Ankri S."/>
            <person name="Ficner R."/>
        </authorList>
    </citation>
    <scope>X-RAY CRYSTALLOGRAPHY (1.90 ANGSTROMS) IN COMPLEX WITH MAGNESIUM AND PHOSPHOGLYCERATE</scope>
    <scope>SUBUNIT</scope>
    <scope>COFACTOR</scope>
    <scope>DISULFIDE BOND</scope>
</reference>
<sequence>MSIQKVHAREILDSRGNPTIEVEITTGKGMFRSCVPSGASTGVHEAVELRDGDKKRYGGKGVLKAVENVNTIIGPALLGKNVLNQAELDEMMIKLDGTNNKGKLGANAILGCSMSICRAAAAEKGLPLYKYLAELTGHKEMTMPVPCFNVINGGAHAGNALAMQEFMICPTGATNFHEALRMAAETYQCLKVVIKAKYGQDATNVGDEGGFAPNVSGAREALDLLVEAIAKAGYTGKIEIAMDCAASEFYNEETKKYDLGKKIPADKKDPSLVKDVDGLIAEYVDYGKHYPIASIEDPFAEDDWAAWNKFTVEHGNFQIVGDDLLVTNPARVQMAMDKNACNSVLIKVNQIGTLTETFKTIKMAQEKGWGVMASHRSGETEDTFIADLVVGLNCKQIKTGAPCRSERLCKYNQLMRIEEELGNIPYAGKNWRNSTA</sequence>
<organism evidence="12">
    <name type="scientific">Entamoeba histolytica (strain ATCC 30459 / HM-1:IMSS / ABRM)</name>
    <dbReference type="NCBI Taxonomy" id="294381"/>
    <lineage>
        <taxon>Eukaryota</taxon>
        <taxon>Amoebozoa</taxon>
        <taxon>Evosea</taxon>
        <taxon>Archamoebae</taxon>
        <taxon>Mastigamoebida</taxon>
        <taxon>Entamoebidae</taxon>
        <taxon>Entamoeba</taxon>
    </lineage>
</organism>
<gene>
    <name evidence="6" type="primary">ENO</name>
    <name evidence="7" type="synonym">ENL-1</name>
    <name evidence="12" type="ORF">EHI_130700</name>
</gene>
<accession>P51555</accession>
<accession>A0A175JIN2</accession>
<accession>C4LXE8</accession>
<accession>S0AUS0</accession>
<name>ENO_ENTH1</name>
<keyword id="KW-0002">3D-structure</keyword>
<keyword id="KW-0963">Cytoplasm</keyword>
<keyword id="KW-1015">Disulfide bond</keyword>
<keyword id="KW-0324">Glycolysis</keyword>
<keyword id="KW-0456">Lyase</keyword>
<keyword id="KW-0460">Magnesium</keyword>
<keyword id="KW-0479">Metal-binding</keyword>
<keyword id="KW-0539">Nucleus</keyword>
<keyword id="KW-1185">Reference proteome</keyword>
<evidence type="ECO:0000250" key="1">
    <source>
        <dbReference type="UniProtKB" id="P00924"/>
    </source>
</evidence>
<evidence type="ECO:0000250" key="2">
    <source>
        <dbReference type="UniProtKB" id="P06733"/>
    </source>
</evidence>
<evidence type="ECO:0000269" key="3">
    <source>
    </source>
</evidence>
<evidence type="ECO:0000269" key="4">
    <source>
    </source>
</evidence>
<evidence type="ECO:0000269" key="5">
    <source>
    </source>
</evidence>
<evidence type="ECO:0000303" key="6">
    <source>
    </source>
</evidence>
<evidence type="ECO:0000303" key="7">
    <source>
    </source>
</evidence>
<evidence type="ECO:0000305" key="8"/>
<evidence type="ECO:0000305" key="9">
    <source>
    </source>
</evidence>
<evidence type="ECO:0000312" key="10">
    <source>
        <dbReference type="EMBL" id="AAA80166.1"/>
    </source>
</evidence>
<evidence type="ECO:0000312" key="11">
    <source>
        <dbReference type="EMBL" id="BAN38528.1"/>
    </source>
</evidence>
<evidence type="ECO:0000312" key="12">
    <source>
        <dbReference type="EMBL" id="EAL43773.1"/>
    </source>
</evidence>
<evidence type="ECO:0000312" key="13">
    <source>
        <dbReference type="PDB" id="3QTP"/>
    </source>
</evidence>
<evidence type="ECO:0007744" key="14">
    <source>
        <dbReference type="PDB" id="3QTP"/>
    </source>
</evidence>
<evidence type="ECO:0007829" key="15">
    <source>
        <dbReference type="PDB" id="3QTP"/>
    </source>
</evidence>
<proteinExistence type="evidence at protein level"/>
<comment type="function">
    <text evidence="3 4">Glycolytic enzyme that catalyzes the conversion of 2-phosphoglycerate to phosphoenolpyruvate (PubMed:15794763). Inhibits tRNA methyltransferase METH catalytic activity in the absence of 2-phosphoglycerate (PubMed:20174608).</text>
</comment>
<comment type="catalytic activity">
    <reaction evidence="3">
        <text>(2R)-2-phosphoglycerate = phosphoenolpyruvate + H2O</text>
        <dbReference type="Rhea" id="RHEA:10164"/>
        <dbReference type="ChEBI" id="CHEBI:15377"/>
        <dbReference type="ChEBI" id="CHEBI:58289"/>
        <dbReference type="ChEBI" id="CHEBI:58702"/>
        <dbReference type="EC" id="4.2.1.11"/>
    </reaction>
    <physiologicalReaction direction="left-to-right" evidence="3">
        <dbReference type="Rhea" id="RHEA:10165"/>
    </physiologicalReaction>
    <physiologicalReaction direction="right-to-left" evidence="3">
        <dbReference type="Rhea" id="RHEA:10166"/>
    </physiologicalReaction>
</comment>
<comment type="cofactor">
    <cofactor evidence="3 9">
        <name>Mg(2+)</name>
        <dbReference type="ChEBI" id="CHEBI:18420"/>
    </cofactor>
    <text evidence="2">Binds 2 Mg(2+) ions per subunit. Required for catalysis and for stabilizing the dimer.</text>
</comment>
<comment type="biophysicochemical properties">
    <kinetics>
        <KM evidence="3">55 uM for 2-phosphoglycerate (at pH 7 and 37 degrees Celsius)</KM>
        <KM evidence="3">60 uM for 2-phosphoglycerate (at pH 6 and 37 degrees Celsius)</KM>
        <KM evidence="3">63 uM for phosphoenolpyruvate (at pH 7 and 37 degrees Celsius)</KM>
        <KM evidence="3">102 uM for phosphoenolpyruvate (at pH 6 and 37 degrees Celsius)</KM>
        <Vmax evidence="3">103.0 umol/min/mg enzyme with 2-phosphoglycerate as substrate (at pH 7 and 37 degrees Celsius)</Vmax>
        <Vmax evidence="3">89.0 umol/min/mg enzyme with 2-phosphoglycerate as substrate (at pH 6 and 37 degrees Celsius)</Vmax>
        <Vmax evidence="3">26.0 umol/min/mg enzyme with phosphoenolpyruvate as substrate (at pH 7 and 37 degrees Celsius)</Vmax>
        <Vmax evidence="3">33.0 umol/min/mg enzyme with phosphoenolpyruvate as substrate (at pH 6 and 37 degrees Celsius)</Vmax>
        <text evidence="3">kcat is 170 sec(-1) with 2-phosphoglycerate as substrate (at pH 7 and 37 degrees Celsius) (PubMed:15794763). kcat is 147 sec(-1) with 2-phosphoglycerate as substrate (at pH 6 and 37 degrees Celsius) (PubMed:15794763). kcat is 43 sec(-1) with phosphoenolpyruvate as substrate (at pH 7 and 37 degrees Celsius) (PubMed:15794763). kcat is 55 sec(-1) with phosphoenolpyruvate as substrate (at pH 6 and 37 degrees Celsius) (PubMed:15794763).</text>
    </kinetics>
    <phDependence>
        <text evidence="3">Optimum pH is 6.5-7.7 for the conversion of 2-phosphoglycerate to phosphoenolpyruvate (PubMed:15794763). Optimum pH is 6.0 for the conversion of phosphoenolpyruvate to 2-phosphoglycerate (PubMed:15794763).</text>
    </phDependence>
</comment>
<comment type="pathway">
    <text evidence="3">Carbohydrate degradation; glycolysis; pyruvate from D-glyceraldehyde 3-phosphate: step 4/5.</text>
</comment>
<comment type="subunit">
    <text evidence="3 4 9">Homodimer (Probable). Homotetramer (PubMed:15794763). Interacts with methyltransferase METH; the interaction inhibits METH catalytic activity; 2-phosphoglycerate binding to ENO prevents the interaction with METH (PubMed:20174608).</text>
</comment>
<comment type="subcellular location">
    <subcellularLocation>
        <location evidence="4">Cytoplasm</location>
    </subcellularLocation>
    <subcellularLocation>
        <location evidence="4">Nucleus</location>
    </subcellularLocation>
    <text evidence="4">During glucose starvation, accumulates in the nucleus.</text>
</comment>
<comment type="developmental stage">
    <text evidence="4">Expressed in trophozoites (at protein level).</text>
</comment>
<comment type="similarity">
    <text evidence="8">Belongs to the enolase family.</text>
</comment>
<feature type="chain" id="PRO_0000134080" description="Enolase 1">
    <location>
        <begin position="1"/>
        <end position="436"/>
    </location>
</feature>
<feature type="active site" description="Proton donor" evidence="1">
    <location>
        <position position="208"/>
    </location>
</feature>
<feature type="active site" description="Proton acceptor" evidence="1">
    <location>
        <position position="347"/>
    </location>
</feature>
<feature type="binding site" evidence="2">
    <location>
        <position position="40"/>
    </location>
    <ligand>
        <name>Mg(2+)</name>
        <dbReference type="ChEBI" id="CHEBI:18420"/>
        <label>1</label>
    </ligand>
</feature>
<feature type="binding site" evidence="5 14">
    <location>
        <position position="164"/>
    </location>
    <ligand>
        <name>(2R)-2-phosphoglycerate</name>
        <dbReference type="ChEBI" id="CHEBI:58289"/>
    </ligand>
</feature>
<feature type="binding site" evidence="5 14">
    <location>
        <position position="208"/>
    </location>
    <ligand>
        <name>(2R)-2-phosphoglycerate</name>
        <dbReference type="ChEBI" id="CHEBI:58289"/>
    </ligand>
</feature>
<feature type="binding site" evidence="5 14">
    <location>
        <position position="243"/>
    </location>
    <ligand>
        <name>Mg(2+)</name>
        <dbReference type="ChEBI" id="CHEBI:18420"/>
        <label>2</label>
    </ligand>
</feature>
<feature type="binding site" evidence="5 14">
    <location>
        <position position="296"/>
    </location>
    <ligand>
        <name>Mg(2+)</name>
        <dbReference type="ChEBI" id="CHEBI:18420"/>
        <label>2</label>
    </ligand>
</feature>
<feature type="binding site" evidence="5 14">
    <location>
        <position position="322"/>
    </location>
    <ligand>
        <name>(2R)-2-phosphoglycerate</name>
        <dbReference type="ChEBI" id="CHEBI:58289"/>
    </ligand>
</feature>
<feature type="binding site" evidence="5 14">
    <location>
        <position position="322"/>
    </location>
    <ligand>
        <name>Mg(2+)</name>
        <dbReference type="ChEBI" id="CHEBI:18420"/>
        <label>2</label>
    </ligand>
</feature>
<feature type="binding site" evidence="5 14">
    <location>
        <position position="376"/>
    </location>
    <ligand>
        <name>(2R)-2-phosphoglycerate</name>
        <dbReference type="ChEBI" id="CHEBI:58289"/>
    </ligand>
</feature>
<feature type="binding site" evidence="5 14">
    <location>
        <position position="377"/>
    </location>
    <ligand>
        <name>(2R)-2-phosphoglycerate</name>
        <dbReference type="ChEBI" id="CHEBI:58289"/>
    </ligand>
</feature>
<feature type="disulfide bond" evidence="5 14">
    <location>
        <begin position="147"/>
        <end position="169"/>
    </location>
</feature>
<feature type="strand" evidence="15">
    <location>
        <begin position="5"/>
        <end position="12"/>
    </location>
</feature>
<feature type="strand" evidence="15">
    <location>
        <begin position="18"/>
        <end position="26"/>
    </location>
</feature>
<feature type="strand" evidence="15">
    <location>
        <begin position="29"/>
        <end position="34"/>
    </location>
</feature>
<feature type="strand" evidence="15">
    <location>
        <begin position="43"/>
        <end position="45"/>
    </location>
</feature>
<feature type="helix" evidence="15">
    <location>
        <begin position="57"/>
        <end position="59"/>
    </location>
</feature>
<feature type="helix" evidence="15">
    <location>
        <begin position="63"/>
        <end position="71"/>
    </location>
</feature>
<feature type="helix" evidence="15">
    <location>
        <begin position="73"/>
        <end position="77"/>
    </location>
</feature>
<feature type="helix" evidence="15">
    <location>
        <begin position="85"/>
        <end position="96"/>
    </location>
</feature>
<feature type="turn" evidence="15">
    <location>
        <begin position="102"/>
        <end position="104"/>
    </location>
</feature>
<feature type="helix" evidence="15">
    <location>
        <begin position="106"/>
        <end position="123"/>
    </location>
</feature>
<feature type="helix" evidence="15">
    <location>
        <begin position="128"/>
        <end position="136"/>
    </location>
</feature>
<feature type="strand" evidence="15">
    <location>
        <begin position="145"/>
        <end position="152"/>
    </location>
</feature>
<feature type="helix" evidence="15">
    <location>
        <begin position="154"/>
        <end position="156"/>
    </location>
</feature>
<feature type="strand" evidence="15">
    <location>
        <begin position="158"/>
        <end position="160"/>
    </location>
</feature>
<feature type="strand" evidence="15">
    <location>
        <begin position="163"/>
        <end position="169"/>
    </location>
</feature>
<feature type="helix" evidence="15">
    <location>
        <begin position="176"/>
        <end position="198"/>
    </location>
</feature>
<feature type="helix" evidence="15">
    <location>
        <begin position="200"/>
        <end position="203"/>
    </location>
</feature>
<feature type="helix" evidence="15">
    <location>
        <begin position="218"/>
        <end position="232"/>
    </location>
</feature>
<feature type="turn" evidence="15">
    <location>
        <begin position="235"/>
        <end position="237"/>
    </location>
</feature>
<feature type="strand" evidence="15">
    <location>
        <begin position="239"/>
        <end position="243"/>
    </location>
</feature>
<feature type="helix" evidence="15">
    <location>
        <begin position="246"/>
        <end position="249"/>
    </location>
</feature>
<feature type="turn" evidence="15">
    <location>
        <begin position="252"/>
        <end position="255"/>
    </location>
</feature>
<feature type="strand" evidence="15">
    <location>
        <begin position="256"/>
        <end position="258"/>
    </location>
</feature>
<feature type="turn" evidence="15">
    <location>
        <begin position="259"/>
        <end position="262"/>
    </location>
</feature>
<feature type="helix" evidence="15">
    <location>
        <begin position="265"/>
        <end position="267"/>
    </location>
</feature>
<feature type="helix" evidence="15">
    <location>
        <begin position="270"/>
        <end position="272"/>
    </location>
</feature>
<feature type="helix" evidence="15">
    <location>
        <begin position="276"/>
        <end position="289"/>
    </location>
</feature>
<feature type="strand" evidence="15">
    <location>
        <begin position="292"/>
        <end position="297"/>
    </location>
</feature>
<feature type="helix" evidence="15">
    <location>
        <begin position="304"/>
        <end position="313"/>
    </location>
</feature>
<feature type="turn" evidence="15">
    <location>
        <begin position="314"/>
        <end position="316"/>
    </location>
</feature>
<feature type="strand" evidence="15">
    <location>
        <begin position="317"/>
        <end position="322"/>
    </location>
</feature>
<feature type="turn" evidence="15">
    <location>
        <begin position="323"/>
        <end position="327"/>
    </location>
</feature>
<feature type="helix" evidence="15">
    <location>
        <begin position="329"/>
        <end position="338"/>
    </location>
</feature>
<feature type="strand" evidence="15">
    <location>
        <begin position="342"/>
        <end position="346"/>
    </location>
</feature>
<feature type="helix" evidence="15">
    <location>
        <begin position="348"/>
        <end position="350"/>
    </location>
</feature>
<feature type="helix" evidence="15">
    <location>
        <begin position="354"/>
        <end position="366"/>
    </location>
</feature>
<feature type="strand" evidence="15">
    <location>
        <begin position="370"/>
        <end position="374"/>
    </location>
</feature>
<feature type="helix" evidence="15">
    <location>
        <begin position="384"/>
        <end position="391"/>
    </location>
</feature>
<feature type="strand" evidence="15">
    <location>
        <begin position="395"/>
        <end position="398"/>
    </location>
</feature>
<feature type="helix" evidence="15">
    <location>
        <begin position="405"/>
        <end position="421"/>
    </location>
</feature>